<comment type="function">
    <text evidence="1">One of the primary rRNA binding proteins, this protein initially binds near the 5'-end of the 23S rRNA. It is important during the early stages of 50S assembly. It makes multiple contacts with different domains of the 23S rRNA in the assembled 50S subunit and ribosome (By similarity).</text>
</comment>
<comment type="function">
    <text evidence="1">Protein L4 is a both a transcriptional repressor and a translational repressor protein. It regulates transcription of the S10 operon (to which L4 belongs) by causing premature termination of transcription within the S10 leader. L4 controls the translation of the S10 operon by binding to its mRNA (By similarity).</text>
</comment>
<comment type="function">
    <text>This protein when expressed in E.coli represses both transcription and translation of the endogenous S10 operon. As the H.influenzae S10 leader can be regulated in vitro by the E.coli L4 protein this strongly suggests the endogenous protein controls its own S10 operon in a similar fashion.</text>
</comment>
<comment type="function">
    <text evidence="1">Forms part of the polypeptide exit tunnel.</text>
</comment>
<comment type="subunit">
    <text>Part of the 50S ribosomal subunit.</text>
</comment>
<comment type="similarity">
    <text evidence="3">Belongs to the universal ribosomal protein uL4 family.</text>
</comment>
<proteinExistence type="inferred from homology"/>
<reference key="1">
    <citation type="journal article" date="1995" name="Science">
        <title>Whole-genome random sequencing and assembly of Haemophilus influenzae Rd.</title>
        <authorList>
            <person name="Fleischmann R.D."/>
            <person name="Adams M.D."/>
            <person name="White O."/>
            <person name="Clayton R.A."/>
            <person name="Kirkness E.F."/>
            <person name="Kerlavage A.R."/>
            <person name="Bult C.J."/>
            <person name="Tomb J.-F."/>
            <person name="Dougherty B.A."/>
            <person name="Merrick J.M."/>
            <person name="McKenney K."/>
            <person name="Sutton G.G."/>
            <person name="FitzHugh W."/>
            <person name="Fields C.A."/>
            <person name="Gocayne J.D."/>
            <person name="Scott J.D."/>
            <person name="Shirley R."/>
            <person name="Liu L.-I."/>
            <person name="Glodek A."/>
            <person name="Kelley J.M."/>
            <person name="Weidman J.F."/>
            <person name="Phillips C.A."/>
            <person name="Spriggs T."/>
            <person name="Hedblom E."/>
            <person name="Cotton M.D."/>
            <person name="Utterback T.R."/>
            <person name="Hanna M.C."/>
            <person name="Nguyen D.T."/>
            <person name="Saudek D.M."/>
            <person name="Brandon R.C."/>
            <person name="Fine L.D."/>
            <person name="Fritchman J.L."/>
            <person name="Fuhrmann J.L."/>
            <person name="Geoghagen N.S.M."/>
            <person name="Gnehm C.L."/>
            <person name="McDonald L.A."/>
            <person name="Small K.V."/>
            <person name="Fraser C.M."/>
            <person name="Smith H.O."/>
            <person name="Venter J.C."/>
        </authorList>
    </citation>
    <scope>NUCLEOTIDE SEQUENCE [LARGE SCALE GENOMIC DNA]</scope>
    <source>
        <strain>ATCC 51907 / DSM 11121 / KW20 / Rd</strain>
    </source>
</reference>
<reference key="2">
    <citation type="journal article" date="1995" name="Biochem. Cell Biol.">
        <title>Regulation of the Escherichia coli S10 ribosomal protein operon by heterologous L4 ribosomal proteins.</title>
        <authorList>
            <person name="Zengel J.M."/>
            <person name="Vorozheikina D."/>
            <person name="Li X."/>
            <person name="Lindahl L."/>
        </authorList>
    </citation>
    <scope>NUCLEOTIDE SEQUENCE [GENOMIC DNA]</scope>
    <scope>ABILITY TO REPRESS THE E.COLI S10 OPERON</scope>
</reference>
<reference key="3">
    <citation type="journal article" date="1999" name="J. Bacteriol.">
        <title>Phylogenetic analysis of L4-mediated autogenous control of the S10 ribosomal protein operon.</title>
        <authorList>
            <person name="Allen T."/>
            <person name="Shen P."/>
            <person name="Samsel L."/>
            <person name="Liu R."/>
            <person name="Lindahl L."/>
            <person name="Zengel J.M."/>
        </authorList>
    </citation>
    <scope>EVIDENCE FOR REGULATION OF THE S10 OPERON</scope>
</reference>
<reference key="4">
    <citation type="journal article" date="2003" name="Antimicrob. Agents Chemother.">
        <title>Effects of an efflux mechanism and ribosomal mutations on macrolide susceptibility of Haemophilus influenzae clinical isolates.</title>
        <authorList>
            <person name="Peric M."/>
            <person name="Bozdogan B."/>
            <person name="Jacobs M.R."/>
            <person name="Appelbaum P.C."/>
        </authorList>
    </citation>
    <scope>MACROLIDE RESISTANT VARIANTS</scope>
</reference>
<keyword id="KW-0046">Antibiotic resistance</keyword>
<keyword id="KW-1185">Reference proteome</keyword>
<keyword id="KW-0678">Repressor</keyword>
<keyword id="KW-0687">Ribonucleoprotein</keyword>
<keyword id="KW-0689">Ribosomal protein</keyword>
<keyword id="KW-0694">RNA-binding</keyword>
<keyword id="KW-0699">rRNA-binding</keyword>
<keyword id="KW-0804">Transcription</keyword>
<keyword id="KW-0805">Transcription regulation</keyword>
<keyword id="KW-0806">Transcription termination</keyword>
<keyword id="KW-0810">Translation regulation</keyword>
<gene>
    <name type="primary">rplD</name>
    <name type="synonym">rpl4</name>
    <name type="ordered locus">HI_0778</name>
</gene>
<dbReference type="EMBL" id="L42023">
    <property type="protein sequence ID" value="AAC22437.1"/>
    <property type="molecule type" value="Genomic_DNA"/>
</dbReference>
<dbReference type="EMBL" id="U37797">
    <property type="protein sequence ID" value="AAB41511.1"/>
    <property type="molecule type" value="Genomic_DNA"/>
</dbReference>
<dbReference type="PIR" id="F64092">
    <property type="entry name" value="F64092"/>
</dbReference>
<dbReference type="RefSeq" id="NP_438937.1">
    <property type="nucleotide sequence ID" value="NC_000907.1"/>
</dbReference>
<dbReference type="SMR" id="P44345"/>
<dbReference type="STRING" id="71421.HI_0778"/>
<dbReference type="DrugBank" id="DB01321">
    <property type="generic name" value="Josamycin"/>
</dbReference>
<dbReference type="EnsemblBacteria" id="AAC22437">
    <property type="protein sequence ID" value="AAC22437"/>
    <property type="gene ID" value="HI_0778"/>
</dbReference>
<dbReference type="KEGG" id="hin:HI_0778"/>
<dbReference type="PATRIC" id="fig|71421.8.peg.817"/>
<dbReference type="eggNOG" id="COG0088">
    <property type="taxonomic scope" value="Bacteria"/>
</dbReference>
<dbReference type="HOGENOM" id="CLU_041575_5_2_6"/>
<dbReference type="OrthoDB" id="9803201at2"/>
<dbReference type="PhylomeDB" id="P44345"/>
<dbReference type="BioCyc" id="HINF71421:G1GJ1-818-MONOMER"/>
<dbReference type="Proteomes" id="UP000000579">
    <property type="component" value="Chromosome"/>
</dbReference>
<dbReference type="GO" id="GO:1990904">
    <property type="term" value="C:ribonucleoprotein complex"/>
    <property type="evidence" value="ECO:0007669"/>
    <property type="project" value="UniProtKB-KW"/>
</dbReference>
<dbReference type="GO" id="GO:0005840">
    <property type="term" value="C:ribosome"/>
    <property type="evidence" value="ECO:0007669"/>
    <property type="project" value="UniProtKB-KW"/>
</dbReference>
<dbReference type="GO" id="GO:0019843">
    <property type="term" value="F:rRNA binding"/>
    <property type="evidence" value="ECO:0007669"/>
    <property type="project" value="UniProtKB-UniRule"/>
</dbReference>
<dbReference type="GO" id="GO:0003735">
    <property type="term" value="F:structural constituent of ribosome"/>
    <property type="evidence" value="ECO:0000318"/>
    <property type="project" value="GO_Central"/>
</dbReference>
<dbReference type="GO" id="GO:0006353">
    <property type="term" value="P:DNA-templated transcription termination"/>
    <property type="evidence" value="ECO:0007669"/>
    <property type="project" value="UniProtKB-KW"/>
</dbReference>
<dbReference type="GO" id="GO:0006417">
    <property type="term" value="P:regulation of translation"/>
    <property type="evidence" value="ECO:0007669"/>
    <property type="project" value="UniProtKB-KW"/>
</dbReference>
<dbReference type="GO" id="GO:0046677">
    <property type="term" value="P:response to antibiotic"/>
    <property type="evidence" value="ECO:0007669"/>
    <property type="project" value="UniProtKB-KW"/>
</dbReference>
<dbReference type="GO" id="GO:0006412">
    <property type="term" value="P:translation"/>
    <property type="evidence" value="ECO:0007669"/>
    <property type="project" value="UniProtKB-UniRule"/>
</dbReference>
<dbReference type="FunFam" id="3.40.1370.10:FF:000001">
    <property type="entry name" value="50S ribosomal protein L4"/>
    <property type="match status" value="1"/>
</dbReference>
<dbReference type="Gene3D" id="3.40.1370.10">
    <property type="match status" value="1"/>
</dbReference>
<dbReference type="HAMAP" id="MF_01328_B">
    <property type="entry name" value="Ribosomal_uL4_B"/>
    <property type="match status" value="1"/>
</dbReference>
<dbReference type="InterPro" id="IPR002136">
    <property type="entry name" value="Ribosomal_uL4"/>
</dbReference>
<dbReference type="InterPro" id="IPR013005">
    <property type="entry name" value="Ribosomal_uL4-like"/>
</dbReference>
<dbReference type="InterPro" id="IPR023574">
    <property type="entry name" value="Ribosomal_uL4_dom_sf"/>
</dbReference>
<dbReference type="NCBIfam" id="TIGR03953">
    <property type="entry name" value="rplD_bact"/>
    <property type="match status" value="1"/>
</dbReference>
<dbReference type="PANTHER" id="PTHR10746">
    <property type="entry name" value="50S RIBOSOMAL PROTEIN L4"/>
    <property type="match status" value="1"/>
</dbReference>
<dbReference type="PANTHER" id="PTHR10746:SF6">
    <property type="entry name" value="LARGE RIBOSOMAL SUBUNIT PROTEIN UL4M"/>
    <property type="match status" value="1"/>
</dbReference>
<dbReference type="Pfam" id="PF00573">
    <property type="entry name" value="Ribosomal_L4"/>
    <property type="match status" value="1"/>
</dbReference>
<dbReference type="SUPFAM" id="SSF52166">
    <property type="entry name" value="Ribosomal protein L4"/>
    <property type="match status" value="1"/>
</dbReference>
<evidence type="ECO:0000250" key="1"/>
<evidence type="ECO:0000256" key="2">
    <source>
        <dbReference type="SAM" id="MobiDB-lite"/>
    </source>
</evidence>
<evidence type="ECO:0000305" key="3"/>
<protein>
    <recommendedName>
        <fullName evidence="3">Large ribosomal subunit protein uL4</fullName>
    </recommendedName>
    <alternativeName>
        <fullName>50S ribosomal protein L4</fullName>
    </alternativeName>
</protein>
<sequence>MELQVVGANALTVSETTFGREFNEALIHQVVVAYAAGARQGTRAQKTRAEVSGSGKKPWRQKGTGRARAGDIKSPIWRSGGTTFAAKPQDHSQKVNKKMYRGAIKSILSELVRQDRLVVVEKFELDAPKTKVLVQKLKDLAVEDALIITASLDENLFLAARNLYKVDVRDVQGIDPVSLIAFDKVIVTVDAVKQIEEILA</sequence>
<name>RL4_HAEIN</name>
<accession>P44345</accession>
<feature type="chain" id="PRO_0000129223" description="Large ribosomal subunit protein uL4">
    <location>
        <begin position="1"/>
        <end position="200"/>
    </location>
</feature>
<feature type="region of interest" description="Disordered" evidence="2">
    <location>
        <begin position="43"/>
        <end position="67"/>
    </location>
</feature>
<feature type="sequence variant" description="In strain: S4; confers macrolide resistance.">
    <original>G</original>
    <variation>GGT</variation>
    <location>
        <position position="63"/>
    </location>
</feature>
<feature type="sequence variant" description="In strain: S39; confers macrolide resistance.">
    <original>T</original>
    <variation>K</variation>
    <location>
        <position position="64"/>
    </location>
</feature>
<feature type="sequence variant" description="In strain: S27 and S47; confers macrolide resistance.">
    <original>G</original>
    <variation>D</variation>
    <location>
        <position position="65"/>
    </location>
</feature>
<feature type="sequence variant" description="In strain: S50; confers macrolide resistance.">
    <original>A</original>
    <variation>S</variation>
    <location>
        <position position="69"/>
    </location>
</feature>
<feature type="sequence variant" description="In strain: S54; confers macrolide resistance.">
    <original>T</original>
    <variation>I</variation>
    <location>
        <position position="82"/>
    </location>
</feature>
<feature type="sequence conflict" description="In Ref. 2; AAB41511." evidence="3" ref="2">
    <original>G</original>
    <variation>A</variation>
    <location>
        <position position="65"/>
    </location>
</feature>
<organism>
    <name type="scientific">Haemophilus influenzae (strain ATCC 51907 / DSM 11121 / KW20 / Rd)</name>
    <dbReference type="NCBI Taxonomy" id="71421"/>
    <lineage>
        <taxon>Bacteria</taxon>
        <taxon>Pseudomonadati</taxon>
        <taxon>Pseudomonadota</taxon>
        <taxon>Gammaproteobacteria</taxon>
        <taxon>Pasteurellales</taxon>
        <taxon>Pasteurellaceae</taxon>
        <taxon>Haemophilus</taxon>
    </lineage>
</organism>